<reference key="1">
    <citation type="journal article" date="1999" name="Nature">
        <title>Sequence and analysis of chromosome 4 of the plant Arabidopsis thaliana.</title>
        <authorList>
            <person name="Mayer K.F.X."/>
            <person name="Schueller C."/>
            <person name="Wambutt R."/>
            <person name="Murphy G."/>
            <person name="Volckaert G."/>
            <person name="Pohl T."/>
            <person name="Duesterhoeft A."/>
            <person name="Stiekema W."/>
            <person name="Entian K.-D."/>
            <person name="Terryn N."/>
            <person name="Harris B."/>
            <person name="Ansorge W."/>
            <person name="Brandt P."/>
            <person name="Grivell L.A."/>
            <person name="Rieger M."/>
            <person name="Weichselgartner M."/>
            <person name="de Simone V."/>
            <person name="Obermaier B."/>
            <person name="Mache R."/>
            <person name="Mueller M."/>
            <person name="Kreis M."/>
            <person name="Delseny M."/>
            <person name="Puigdomenech P."/>
            <person name="Watson M."/>
            <person name="Schmidtheini T."/>
            <person name="Reichert B."/>
            <person name="Portetelle D."/>
            <person name="Perez-Alonso M."/>
            <person name="Boutry M."/>
            <person name="Bancroft I."/>
            <person name="Vos P."/>
            <person name="Hoheisel J."/>
            <person name="Zimmermann W."/>
            <person name="Wedler H."/>
            <person name="Ridley P."/>
            <person name="Langham S.-A."/>
            <person name="McCullagh B."/>
            <person name="Bilham L."/>
            <person name="Robben J."/>
            <person name="van der Schueren J."/>
            <person name="Grymonprez B."/>
            <person name="Chuang Y.-J."/>
            <person name="Vandenbussche F."/>
            <person name="Braeken M."/>
            <person name="Weltjens I."/>
            <person name="Voet M."/>
            <person name="Bastiaens I."/>
            <person name="Aert R."/>
            <person name="Defoor E."/>
            <person name="Weitzenegger T."/>
            <person name="Bothe G."/>
            <person name="Ramsperger U."/>
            <person name="Hilbert H."/>
            <person name="Braun M."/>
            <person name="Holzer E."/>
            <person name="Brandt A."/>
            <person name="Peters S."/>
            <person name="van Staveren M."/>
            <person name="Dirkse W."/>
            <person name="Mooijman P."/>
            <person name="Klein Lankhorst R."/>
            <person name="Rose M."/>
            <person name="Hauf J."/>
            <person name="Koetter P."/>
            <person name="Berneiser S."/>
            <person name="Hempel S."/>
            <person name="Feldpausch M."/>
            <person name="Lamberth S."/>
            <person name="Van den Daele H."/>
            <person name="De Keyser A."/>
            <person name="Buysshaert C."/>
            <person name="Gielen J."/>
            <person name="Villarroel R."/>
            <person name="De Clercq R."/>
            <person name="van Montagu M."/>
            <person name="Rogers J."/>
            <person name="Cronin A."/>
            <person name="Quail M.A."/>
            <person name="Bray-Allen S."/>
            <person name="Clark L."/>
            <person name="Doggett J."/>
            <person name="Hall S."/>
            <person name="Kay M."/>
            <person name="Lennard N."/>
            <person name="McLay K."/>
            <person name="Mayes R."/>
            <person name="Pettett A."/>
            <person name="Rajandream M.A."/>
            <person name="Lyne M."/>
            <person name="Benes V."/>
            <person name="Rechmann S."/>
            <person name="Borkova D."/>
            <person name="Bloecker H."/>
            <person name="Scharfe M."/>
            <person name="Grimm M."/>
            <person name="Loehnert T.-H."/>
            <person name="Dose S."/>
            <person name="de Haan M."/>
            <person name="Maarse A.C."/>
            <person name="Schaefer M."/>
            <person name="Mueller-Auer S."/>
            <person name="Gabel C."/>
            <person name="Fuchs M."/>
            <person name="Fartmann B."/>
            <person name="Granderath K."/>
            <person name="Dauner D."/>
            <person name="Herzl A."/>
            <person name="Neumann S."/>
            <person name="Argiriou A."/>
            <person name="Vitale D."/>
            <person name="Liguori R."/>
            <person name="Piravandi E."/>
            <person name="Massenet O."/>
            <person name="Quigley F."/>
            <person name="Clabauld G."/>
            <person name="Muendlein A."/>
            <person name="Felber R."/>
            <person name="Schnabl S."/>
            <person name="Hiller R."/>
            <person name="Schmidt W."/>
            <person name="Lecharny A."/>
            <person name="Aubourg S."/>
            <person name="Chefdor F."/>
            <person name="Cooke R."/>
            <person name="Berger C."/>
            <person name="Monfort A."/>
            <person name="Casacuberta E."/>
            <person name="Gibbons T."/>
            <person name="Weber N."/>
            <person name="Vandenbol M."/>
            <person name="Bargues M."/>
            <person name="Terol J."/>
            <person name="Torres A."/>
            <person name="Perez-Perez A."/>
            <person name="Purnelle B."/>
            <person name="Bent E."/>
            <person name="Johnson S."/>
            <person name="Tacon D."/>
            <person name="Jesse T."/>
            <person name="Heijnen L."/>
            <person name="Schwarz S."/>
            <person name="Scholler P."/>
            <person name="Heber S."/>
            <person name="Francs P."/>
            <person name="Bielke C."/>
            <person name="Frishman D."/>
            <person name="Haase D."/>
            <person name="Lemcke K."/>
            <person name="Mewes H.-W."/>
            <person name="Stocker S."/>
            <person name="Zaccaria P."/>
            <person name="Bevan M."/>
            <person name="Wilson R.K."/>
            <person name="de la Bastide M."/>
            <person name="Habermann K."/>
            <person name="Parnell L."/>
            <person name="Dedhia N."/>
            <person name="Gnoj L."/>
            <person name="Schutz K."/>
            <person name="Huang E."/>
            <person name="Spiegel L."/>
            <person name="Sekhon M."/>
            <person name="Murray J."/>
            <person name="Sheet P."/>
            <person name="Cordes M."/>
            <person name="Abu-Threideh J."/>
            <person name="Stoneking T."/>
            <person name="Kalicki J."/>
            <person name="Graves T."/>
            <person name="Harmon G."/>
            <person name="Edwards J."/>
            <person name="Latreille P."/>
            <person name="Courtney L."/>
            <person name="Cloud J."/>
            <person name="Abbott A."/>
            <person name="Scott K."/>
            <person name="Johnson D."/>
            <person name="Minx P."/>
            <person name="Bentley D."/>
            <person name="Fulton B."/>
            <person name="Miller N."/>
            <person name="Greco T."/>
            <person name="Kemp K."/>
            <person name="Kramer J."/>
            <person name="Fulton L."/>
            <person name="Mardis E."/>
            <person name="Dante M."/>
            <person name="Pepin K."/>
            <person name="Hillier L.W."/>
            <person name="Nelson J."/>
            <person name="Spieth J."/>
            <person name="Ryan E."/>
            <person name="Andrews S."/>
            <person name="Geisel C."/>
            <person name="Layman D."/>
            <person name="Du H."/>
            <person name="Ali J."/>
            <person name="Berghoff A."/>
            <person name="Jones K."/>
            <person name="Drone K."/>
            <person name="Cotton M."/>
            <person name="Joshu C."/>
            <person name="Antonoiu B."/>
            <person name="Zidanic M."/>
            <person name="Strong C."/>
            <person name="Sun H."/>
            <person name="Lamar B."/>
            <person name="Yordan C."/>
            <person name="Ma P."/>
            <person name="Zhong J."/>
            <person name="Preston R."/>
            <person name="Vil D."/>
            <person name="Shekher M."/>
            <person name="Matero A."/>
            <person name="Shah R."/>
            <person name="Swaby I.K."/>
            <person name="O'Shaughnessy A."/>
            <person name="Rodriguez M."/>
            <person name="Hoffman J."/>
            <person name="Till S."/>
            <person name="Granat S."/>
            <person name="Shohdy N."/>
            <person name="Hasegawa A."/>
            <person name="Hameed A."/>
            <person name="Lodhi M."/>
            <person name="Johnson A."/>
            <person name="Chen E."/>
            <person name="Marra M.A."/>
            <person name="Martienssen R."/>
            <person name="McCombie W.R."/>
        </authorList>
    </citation>
    <scope>NUCLEOTIDE SEQUENCE [LARGE SCALE GENOMIC DNA]</scope>
    <source>
        <strain>cv. Columbia</strain>
    </source>
</reference>
<reference key="2">
    <citation type="journal article" date="2017" name="Plant J.">
        <title>Araport11: a complete reannotation of the Arabidopsis thaliana reference genome.</title>
        <authorList>
            <person name="Cheng C.Y."/>
            <person name="Krishnakumar V."/>
            <person name="Chan A.P."/>
            <person name="Thibaud-Nissen F."/>
            <person name="Schobel S."/>
            <person name="Town C.D."/>
        </authorList>
    </citation>
    <scope>GENOME REANNOTATION</scope>
    <source>
        <strain>cv. Columbia</strain>
    </source>
</reference>
<reference key="3">
    <citation type="journal article" date="2003" name="Science">
        <title>Empirical analysis of transcriptional activity in the Arabidopsis genome.</title>
        <authorList>
            <person name="Yamada K."/>
            <person name="Lim J."/>
            <person name="Dale J.M."/>
            <person name="Chen H."/>
            <person name="Shinn P."/>
            <person name="Palm C.J."/>
            <person name="Southwick A.M."/>
            <person name="Wu H.C."/>
            <person name="Kim C.J."/>
            <person name="Nguyen M."/>
            <person name="Pham P.K."/>
            <person name="Cheuk R.F."/>
            <person name="Karlin-Newmann G."/>
            <person name="Liu S.X."/>
            <person name="Lam B."/>
            <person name="Sakano H."/>
            <person name="Wu T."/>
            <person name="Yu G."/>
            <person name="Miranda M."/>
            <person name="Quach H.L."/>
            <person name="Tripp M."/>
            <person name="Chang C.H."/>
            <person name="Lee J.M."/>
            <person name="Toriumi M.J."/>
            <person name="Chan M.M."/>
            <person name="Tang C.C."/>
            <person name="Onodera C.S."/>
            <person name="Deng J.M."/>
            <person name="Akiyama K."/>
            <person name="Ansari Y."/>
            <person name="Arakawa T."/>
            <person name="Banh J."/>
            <person name="Banno F."/>
            <person name="Bowser L."/>
            <person name="Brooks S.Y."/>
            <person name="Carninci P."/>
            <person name="Chao Q."/>
            <person name="Choy N."/>
            <person name="Enju A."/>
            <person name="Goldsmith A.D."/>
            <person name="Gurjal M."/>
            <person name="Hansen N.F."/>
            <person name="Hayashizaki Y."/>
            <person name="Johnson-Hopson C."/>
            <person name="Hsuan V.W."/>
            <person name="Iida K."/>
            <person name="Karnes M."/>
            <person name="Khan S."/>
            <person name="Koesema E."/>
            <person name="Ishida J."/>
            <person name="Jiang P.X."/>
            <person name="Jones T."/>
            <person name="Kawai J."/>
            <person name="Kamiya A."/>
            <person name="Meyers C."/>
            <person name="Nakajima M."/>
            <person name="Narusaka M."/>
            <person name="Seki M."/>
            <person name="Sakurai T."/>
            <person name="Satou M."/>
            <person name="Tamse R."/>
            <person name="Vaysberg M."/>
            <person name="Wallender E.K."/>
            <person name="Wong C."/>
            <person name="Yamamura Y."/>
            <person name="Yuan S."/>
            <person name="Shinozaki K."/>
            <person name="Davis R.W."/>
            <person name="Theologis A."/>
            <person name="Ecker J.R."/>
        </authorList>
    </citation>
    <scope>NUCLEOTIDE SEQUENCE [LARGE SCALE MRNA]</scope>
    <source>
        <strain>cv. Columbia</strain>
    </source>
</reference>
<reference key="4">
    <citation type="journal article" date="2011" name="Trends Plant Sci.">
        <title>Fibrillin protein function: the tip of the iceberg?</title>
        <authorList>
            <person name="Singh D.K."/>
            <person name="McNellis T.W."/>
        </authorList>
    </citation>
    <scope>GENE FAMILY</scope>
    <scope>NOMENCLATURE</scope>
</reference>
<reference key="5">
    <citation type="journal article" date="2012" name="Plant Physiol.">
        <title>The functional network of the Arabidopsis plastoglobule proteome based on quantitative proteomics and genome-wide coexpression analysis.</title>
        <authorList>
            <person name="Lundquist P.K."/>
            <person name="Poliakov A."/>
            <person name="Bhuiyan N.H."/>
            <person name="Zybailov B."/>
            <person name="Sun Q."/>
            <person name="van Wijk K.J."/>
        </authorList>
    </citation>
    <scope>SUBCELLULAR LOCATION [LARGE SCALE ANALYSIS]</scope>
    <source>
        <strain>cv. Columbia</strain>
    </source>
</reference>
<name>PAP11_ARATH</name>
<proteinExistence type="evidence at transcript level"/>
<protein>
    <recommendedName>
        <fullName>Probable plastid-lipid-associated protein 11, chloroplastic</fullName>
    </recommendedName>
    <alternativeName>
        <fullName>Fibrillin-9</fullName>
    </alternativeName>
</protein>
<comment type="subcellular location">
    <subcellularLocation>
        <location evidence="2">Plastid</location>
        <location evidence="2">Chloroplast thylakoid</location>
    </subcellularLocation>
</comment>
<comment type="similarity">
    <text evidence="3">Belongs to the PAP/fibrillin family.</text>
</comment>
<feature type="transit peptide" description="Chloroplast" evidence="1">
    <location>
        <begin position="1"/>
        <end position="25"/>
    </location>
</feature>
<feature type="chain" id="PRO_0000290213" description="Probable plastid-lipid-associated protein 11, chloroplastic">
    <location>
        <begin position="26"/>
        <end position="212"/>
    </location>
</feature>
<organism>
    <name type="scientific">Arabidopsis thaliana</name>
    <name type="common">Mouse-ear cress</name>
    <dbReference type="NCBI Taxonomy" id="3702"/>
    <lineage>
        <taxon>Eukaryota</taxon>
        <taxon>Viridiplantae</taxon>
        <taxon>Streptophyta</taxon>
        <taxon>Embryophyta</taxon>
        <taxon>Tracheophyta</taxon>
        <taxon>Spermatophyta</taxon>
        <taxon>Magnoliopsida</taxon>
        <taxon>eudicotyledons</taxon>
        <taxon>Gunneridae</taxon>
        <taxon>Pentapetalae</taxon>
        <taxon>rosids</taxon>
        <taxon>malvids</taxon>
        <taxon>Brassicales</taxon>
        <taxon>Brassicaceae</taxon>
        <taxon>Camelineae</taxon>
        <taxon>Arabidopsis</taxon>
    </lineage>
</organism>
<sequence length="212" mass="24069">MALALSLSACSPPLRRTRRAGFRTSCSIFANPAQRAKRKLLELISEEDRGLRTQKDPKKRDEIVNAIESMTVIGRSSITTDDSLSATWRLLWTTEKEQLFIIEKAGLFGTTAGDVLQVIDVNKRILNNVITFPPDGVFFVRSDIDIASPQRVNFRFNSAVLRGKNWELPLPPFGKGWFENVYMDGEIRVAKDIRGDYLIVDRAPYNWTESFV</sequence>
<gene>
    <name type="primary">PAP11</name>
    <name type="synonym">FBN9</name>
    <name type="synonym">FIB9</name>
    <name type="ordered locus">At4g00030</name>
    <name type="ORF">F6N15.13</name>
</gene>
<dbReference type="EMBL" id="AF069299">
    <property type="protein sequence ID" value="AAC19310.1"/>
    <property type="molecule type" value="Genomic_DNA"/>
</dbReference>
<dbReference type="EMBL" id="AL161471">
    <property type="protein sequence ID" value="CAB80761.1"/>
    <property type="molecule type" value="Genomic_DNA"/>
</dbReference>
<dbReference type="EMBL" id="CP002687">
    <property type="protein sequence ID" value="AEE81816.1"/>
    <property type="molecule type" value="Genomic_DNA"/>
</dbReference>
<dbReference type="EMBL" id="AY054226">
    <property type="protein sequence ID" value="AAL06886.1"/>
    <property type="molecule type" value="mRNA"/>
</dbReference>
<dbReference type="EMBL" id="AY074558">
    <property type="protein sequence ID" value="AAL67098.1"/>
    <property type="molecule type" value="mRNA"/>
</dbReference>
<dbReference type="PIR" id="T01331">
    <property type="entry name" value="T01331"/>
</dbReference>
<dbReference type="RefSeq" id="NP_191914.1">
    <property type="nucleotide sequence ID" value="NM_116220.2"/>
</dbReference>
<dbReference type="FunCoup" id="O81304">
    <property type="interactions" value="192"/>
</dbReference>
<dbReference type="STRING" id="3702.O81304"/>
<dbReference type="iPTMnet" id="O81304"/>
<dbReference type="PaxDb" id="3702-AT4G00030.1"/>
<dbReference type="ProteomicsDB" id="226053"/>
<dbReference type="DNASU" id="828231"/>
<dbReference type="EnsemblPlants" id="AT4G00030.1">
    <property type="protein sequence ID" value="AT4G00030.1"/>
    <property type="gene ID" value="AT4G00030"/>
</dbReference>
<dbReference type="GeneID" id="828231"/>
<dbReference type="Gramene" id="AT4G00030.1">
    <property type="protein sequence ID" value="AT4G00030.1"/>
    <property type="gene ID" value="AT4G00030"/>
</dbReference>
<dbReference type="KEGG" id="ath:AT4G00030"/>
<dbReference type="Araport" id="AT4G00030"/>
<dbReference type="TAIR" id="AT4G00030">
    <property type="gene designation" value="FBN9"/>
</dbReference>
<dbReference type="eggNOG" id="ENOG502QVAR">
    <property type="taxonomic scope" value="Eukaryota"/>
</dbReference>
<dbReference type="HOGENOM" id="CLU_109114_0_0_1"/>
<dbReference type="InParanoid" id="O81304"/>
<dbReference type="OMA" id="GWFESLY"/>
<dbReference type="OrthoDB" id="423069at2759"/>
<dbReference type="PhylomeDB" id="O81304"/>
<dbReference type="PRO" id="PR:O81304"/>
<dbReference type="Proteomes" id="UP000006548">
    <property type="component" value="Chromosome 4"/>
</dbReference>
<dbReference type="ExpressionAtlas" id="O81304">
    <property type="expression patterns" value="baseline and differential"/>
</dbReference>
<dbReference type="GO" id="GO:0009534">
    <property type="term" value="C:chloroplast thylakoid"/>
    <property type="evidence" value="ECO:0007669"/>
    <property type="project" value="UniProtKB-SubCell"/>
</dbReference>
<dbReference type="InterPro" id="IPR039633">
    <property type="entry name" value="PAP"/>
</dbReference>
<dbReference type="InterPro" id="IPR006843">
    <property type="entry name" value="PAP/fibrillin_dom"/>
</dbReference>
<dbReference type="PANTHER" id="PTHR31906">
    <property type="entry name" value="PLASTID-LIPID-ASSOCIATED PROTEIN 4, CHLOROPLASTIC-RELATED"/>
    <property type="match status" value="1"/>
</dbReference>
<dbReference type="Pfam" id="PF04755">
    <property type="entry name" value="PAP_fibrillin"/>
    <property type="match status" value="1"/>
</dbReference>
<accession>O81304</accession>
<evidence type="ECO:0000255" key="1"/>
<evidence type="ECO:0000269" key="2">
    <source>
    </source>
</evidence>
<evidence type="ECO:0000305" key="3"/>
<keyword id="KW-0150">Chloroplast</keyword>
<keyword id="KW-0934">Plastid</keyword>
<keyword id="KW-1185">Reference proteome</keyword>
<keyword id="KW-0793">Thylakoid</keyword>
<keyword id="KW-0809">Transit peptide</keyword>